<feature type="initiator methionine" description="Removed" evidence="42">
    <location>
        <position position="1"/>
    </location>
</feature>
<feature type="chain" id="PRO_0000433115" description="Heat shock 70 kDa protein 1B">
    <location>
        <begin position="2"/>
        <end position="641"/>
    </location>
</feature>
<feature type="region of interest" description="Nucleotide-binding domain (NBD)" evidence="1">
    <location>
        <begin position="2"/>
        <end position="386"/>
    </location>
</feature>
<feature type="region of interest" description="Substrate-binding domain (SBD)" evidence="1">
    <location>
        <begin position="394"/>
        <end position="509"/>
    </location>
</feature>
<feature type="region of interest" description="Disordered" evidence="2">
    <location>
        <begin position="614"/>
        <end position="641"/>
    </location>
</feature>
<feature type="compositionally biased region" description="Gly residues" evidence="2">
    <location>
        <begin position="614"/>
        <end position="633"/>
    </location>
</feature>
<feature type="binding site">
    <location>
        <begin position="12"/>
        <end position="15"/>
    </location>
    <ligand>
        <name>ATP</name>
        <dbReference type="ChEBI" id="CHEBI:30616"/>
    </ligand>
</feature>
<feature type="binding site">
    <location>
        <position position="71"/>
    </location>
    <ligand>
        <name>ATP</name>
        <dbReference type="ChEBI" id="CHEBI:30616"/>
    </ligand>
</feature>
<feature type="binding site">
    <location>
        <begin position="202"/>
        <end position="204"/>
    </location>
    <ligand>
        <name>ATP</name>
        <dbReference type="ChEBI" id="CHEBI:30616"/>
    </ligand>
</feature>
<feature type="binding site">
    <location>
        <begin position="268"/>
        <end position="275"/>
    </location>
    <ligand>
        <name>ATP</name>
        <dbReference type="ChEBI" id="CHEBI:30616"/>
    </ligand>
</feature>
<feature type="binding site">
    <location>
        <begin position="339"/>
        <end position="342"/>
    </location>
    <ligand>
        <name>ATP</name>
        <dbReference type="ChEBI" id="CHEBI:30616"/>
    </ligand>
</feature>
<feature type="modified residue" description="N-acetylalanine" evidence="42">
    <location>
        <position position="2"/>
    </location>
</feature>
<feature type="modified residue" description="N6-acetyllysine" evidence="30">
    <location>
        <position position="77"/>
    </location>
</feature>
<feature type="modified residue" description="N6-acetyllysine" evidence="43">
    <location>
        <position position="108"/>
    </location>
</feature>
<feature type="modified residue" description="N6-acetyllysine" evidence="43">
    <location>
        <position position="246"/>
    </location>
</feature>
<feature type="modified residue" description="N6-acetyllysine" evidence="43">
    <location>
        <position position="348"/>
    </location>
</feature>
<feature type="modified residue" description="Omega-N-methylarginine" evidence="45">
    <location>
        <position position="469"/>
    </location>
</feature>
<feature type="modified residue" description="N6,N6,N6-trimethyllysine; by METTL21A; alternate" evidence="21 22 45">
    <location>
        <position position="561"/>
    </location>
</feature>
<feature type="modified residue" description="N6,N6-dimethyllysine; alternate" evidence="45">
    <location>
        <position position="561"/>
    </location>
</feature>
<feature type="modified residue" description="Phosphoserine" evidence="44">
    <location>
        <position position="631"/>
    </location>
</feature>
<feature type="modified residue" description="Phosphoserine" evidence="44">
    <location>
        <position position="633"/>
    </location>
</feature>
<feature type="modified residue" description="Phosphothreonine" evidence="44">
    <location>
        <position position="636"/>
    </location>
</feature>
<feature type="sequence variant" id="VAR_032152" evidence="32">
    <original>I</original>
    <variation>V</variation>
    <location>
        <position position="95"/>
    </location>
</feature>
<feature type="sequence variant" id="VAR_032153" description="In dbSNP:rs538280104." evidence="32">
    <original>A</original>
    <variation>V</variation>
    <location>
        <position position="467"/>
    </location>
</feature>
<feature type="sequence variant" id="VAR_029054" description="In dbSNP:rs483638." evidence="6 32">
    <original>N</original>
    <variation>S</variation>
    <location>
        <position position="499"/>
    </location>
</feature>
<feature type="mutagenesis site" description="Reduces affinity for ADP." evidence="19">
    <original>D</original>
    <variation>A</variation>
    <location>
        <position position="10"/>
    </location>
</feature>
<feature type="mutagenesis site" description="No loss of acetylation and ATPase activity. Exhibits normal protein refolding activity during the early phase but exhibits defects in ubiquitin-mediated protein degradation during the later phase." evidence="30">
    <original>K</original>
    <variation>Q</variation>
    <location>
        <position position="77"/>
    </location>
</feature>
<feature type="mutagenesis site" description="Significant loss of acetylation and ATPase activity. Decreased binding to HOPX and HSP90 and increased binding to STUB1 and NAA10. Impaired capacity for protein refolding during the early phase after stress but shows normal protein degradation activity in the late phase." evidence="30">
    <original>K</original>
    <variation>R</variation>
    <location>
        <position position="77"/>
    </location>
</feature>
<feature type="mutagenesis site" description="Reduces affinity for ADP." evidence="19">
    <original>D</original>
    <variation>A</variation>
    <location>
        <position position="199"/>
    </location>
</feature>
<feature type="mutagenesis site" description="Complete loss of in vitro methylation by METTL21A." evidence="21 22">
    <original>K</original>
    <variation>R</variation>
    <location>
        <position position="561"/>
    </location>
</feature>
<feature type="strand" evidence="47">
    <location>
        <begin position="7"/>
        <end position="11"/>
    </location>
</feature>
<feature type="strand" evidence="47">
    <location>
        <begin position="13"/>
        <end position="22"/>
    </location>
</feature>
<feature type="strand" evidence="47">
    <location>
        <begin position="25"/>
        <end position="28"/>
    </location>
</feature>
<feature type="strand" evidence="47">
    <location>
        <begin position="36"/>
        <end position="39"/>
    </location>
</feature>
<feature type="strand" evidence="47">
    <location>
        <begin position="42"/>
        <end position="44"/>
    </location>
</feature>
<feature type="strand" evidence="47">
    <location>
        <begin position="49"/>
        <end position="51"/>
    </location>
</feature>
<feature type="helix" evidence="47">
    <location>
        <begin position="53"/>
        <end position="57"/>
    </location>
</feature>
<feature type="helix" evidence="47">
    <location>
        <begin position="58"/>
        <end position="61"/>
    </location>
</feature>
<feature type="helix" evidence="47">
    <location>
        <begin position="63"/>
        <end position="65"/>
    </location>
</feature>
<feature type="helix" evidence="47">
    <location>
        <begin position="70"/>
        <end position="72"/>
    </location>
</feature>
<feature type="turn" evidence="47">
    <location>
        <begin position="73"/>
        <end position="75"/>
    </location>
</feature>
<feature type="helix" evidence="47">
    <location>
        <begin position="81"/>
        <end position="87"/>
    </location>
</feature>
<feature type="strand" evidence="47">
    <location>
        <begin position="91"/>
        <end position="97"/>
    </location>
</feature>
<feature type="strand" evidence="47">
    <location>
        <begin position="100"/>
        <end position="107"/>
    </location>
</feature>
<feature type="strand" evidence="47">
    <location>
        <begin position="110"/>
        <end position="114"/>
    </location>
</feature>
<feature type="helix" evidence="47">
    <location>
        <begin position="116"/>
        <end position="135"/>
    </location>
</feature>
<feature type="strand" evidence="47">
    <location>
        <begin position="141"/>
        <end position="146"/>
    </location>
</feature>
<feature type="helix" evidence="47">
    <location>
        <begin position="152"/>
        <end position="164"/>
    </location>
</feature>
<feature type="strand" evidence="47">
    <location>
        <begin position="168"/>
        <end position="174"/>
    </location>
</feature>
<feature type="helix" evidence="47">
    <location>
        <begin position="175"/>
        <end position="182"/>
    </location>
</feature>
<feature type="turn" evidence="47">
    <location>
        <begin position="183"/>
        <end position="186"/>
    </location>
</feature>
<feature type="strand" evidence="47">
    <location>
        <begin position="190"/>
        <end position="200"/>
    </location>
</feature>
<feature type="strand" evidence="47">
    <location>
        <begin position="205"/>
        <end position="213"/>
    </location>
</feature>
<feature type="strand" evidence="47">
    <location>
        <begin position="216"/>
        <end position="225"/>
    </location>
</feature>
<feature type="helix" evidence="47">
    <location>
        <begin position="230"/>
        <end position="249"/>
    </location>
</feature>
<feature type="helix" evidence="47">
    <location>
        <begin position="257"/>
        <end position="273"/>
    </location>
</feature>
<feature type="turn" evidence="47">
    <location>
        <begin position="274"/>
        <end position="276"/>
    </location>
</feature>
<feature type="strand" evidence="47">
    <location>
        <begin position="277"/>
        <end position="288"/>
    </location>
</feature>
<feature type="strand" evidence="47">
    <location>
        <begin position="291"/>
        <end position="298"/>
    </location>
</feature>
<feature type="helix" evidence="47">
    <location>
        <begin position="299"/>
        <end position="312"/>
    </location>
</feature>
<feature type="helix" evidence="47">
    <location>
        <begin position="314"/>
        <end position="324"/>
    </location>
</feature>
<feature type="helix" evidence="47">
    <location>
        <begin position="328"/>
        <end position="330"/>
    </location>
</feature>
<feature type="strand" evidence="47">
    <location>
        <begin position="333"/>
        <end position="338"/>
    </location>
</feature>
<feature type="helix" evidence="47">
    <location>
        <begin position="339"/>
        <end position="342"/>
    </location>
</feature>
<feature type="helix" evidence="47">
    <location>
        <begin position="344"/>
        <end position="353"/>
    </location>
</feature>
<feature type="turn" evidence="47">
    <location>
        <begin position="354"/>
        <end position="356"/>
    </location>
</feature>
<feature type="helix" evidence="47">
    <location>
        <begin position="365"/>
        <end position="367"/>
    </location>
</feature>
<feature type="helix" evidence="47">
    <location>
        <begin position="368"/>
        <end position="380"/>
    </location>
</feature>
<feature type="strand" evidence="46">
    <location>
        <begin position="637"/>
        <end position="639"/>
    </location>
</feature>
<reference key="1">
    <citation type="journal article" date="1990" name="Immunogenetics">
        <title>Structure and expression of the three MHC-linked HSP70 genes.</title>
        <authorList>
            <person name="Milner C.M."/>
            <person name="Campbell R.D."/>
        </authorList>
    </citation>
    <scope>NUCLEOTIDE SEQUENCE [GENOMIC DNA]</scope>
</reference>
<reference key="2">
    <citation type="submission" date="1999-09" db="EMBL/GenBank/DDBJ databases">
        <title>Homo sapiens 2,229,817bp genomic DNA of 6p21.3 HLA class I region.</title>
        <authorList>
            <person name="Shiina S."/>
            <person name="Tamiya G."/>
            <person name="Oka A."/>
            <person name="Inoko H."/>
        </authorList>
    </citation>
    <scope>NUCLEOTIDE SEQUENCE [LARGE SCALE GENOMIC DNA]</scope>
</reference>
<reference key="3">
    <citation type="journal article" date="2003" name="Genome Res.">
        <title>Analysis of the gene-dense major histocompatibility complex class III region and its comparison to mouse.</title>
        <authorList>
            <person name="Xie T."/>
            <person name="Rowen L."/>
            <person name="Aguado B."/>
            <person name="Ahearn M.E."/>
            <person name="Madan A."/>
            <person name="Qin S."/>
            <person name="Campbell R.D."/>
            <person name="Hood L."/>
        </authorList>
    </citation>
    <scope>NUCLEOTIDE SEQUENCE [LARGE SCALE GENOMIC DNA]</scope>
    <scope>VARIANT SER-499</scope>
</reference>
<reference key="4">
    <citation type="submission" date="2006-02" db="EMBL/GenBank/DDBJ databases">
        <authorList>
            <consortium name="NIEHS SNPs program"/>
        </authorList>
    </citation>
    <scope>NUCLEOTIDE SEQUENCE [GENOMIC DNA]</scope>
    <scope>VARIANTS VAL-95; VAL-467 AND SER-499</scope>
</reference>
<reference key="5">
    <citation type="journal article" date="2003" name="Nature">
        <title>The DNA sequence and analysis of human chromosome 6.</title>
        <authorList>
            <person name="Mungall A.J."/>
            <person name="Palmer S.A."/>
            <person name="Sims S.K."/>
            <person name="Edwards C.A."/>
            <person name="Ashurst J.L."/>
            <person name="Wilming L."/>
            <person name="Jones M.C."/>
            <person name="Horton R."/>
            <person name="Hunt S.E."/>
            <person name="Scott C.E."/>
            <person name="Gilbert J.G.R."/>
            <person name="Clamp M.E."/>
            <person name="Bethel G."/>
            <person name="Milne S."/>
            <person name="Ainscough R."/>
            <person name="Almeida J.P."/>
            <person name="Ambrose K.D."/>
            <person name="Andrews T.D."/>
            <person name="Ashwell R.I.S."/>
            <person name="Babbage A.K."/>
            <person name="Bagguley C.L."/>
            <person name="Bailey J."/>
            <person name="Banerjee R."/>
            <person name="Barker D.J."/>
            <person name="Barlow K.F."/>
            <person name="Bates K."/>
            <person name="Beare D.M."/>
            <person name="Beasley H."/>
            <person name="Beasley O."/>
            <person name="Bird C.P."/>
            <person name="Blakey S.E."/>
            <person name="Bray-Allen S."/>
            <person name="Brook J."/>
            <person name="Brown A.J."/>
            <person name="Brown J.Y."/>
            <person name="Burford D.C."/>
            <person name="Burrill W."/>
            <person name="Burton J."/>
            <person name="Carder C."/>
            <person name="Carter N.P."/>
            <person name="Chapman J.C."/>
            <person name="Clark S.Y."/>
            <person name="Clark G."/>
            <person name="Clee C.M."/>
            <person name="Clegg S."/>
            <person name="Cobley V."/>
            <person name="Collier R.E."/>
            <person name="Collins J.E."/>
            <person name="Colman L.K."/>
            <person name="Corby N.R."/>
            <person name="Coville G.J."/>
            <person name="Culley K.M."/>
            <person name="Dhami P."/>
            <person name="Davies J."/>
            <person name="Dunn M."/>
            <person name="Earthrowl M.E."/>
            <person name="Ellington A.E."/>
            <person name="Evans K.A."/>
            <person name="Faulkner L."/>
            <person name="Francis M.D."/>
            <person name="Frankish A."/>
            <person name="Frankland J."/>
            <person name="French L."/>
            <person name="Garner P."/>
            <person name="Garnett J."/>
            <person name="Ghori M.J."/>
            <person name="Gilby L.M."/>
            <person name="Gillson C.J."/>
            <person name="Glithero R.J."/>
            <person name="Grafham D.V."/>
            <person name="Grant M."/>
            <person name="Gribble S."/>
            <person name="Griffiths C."/>
            <person name="Griffiths M.N.D."/>
            <person name="Hall R."/>
            <person name="Halls K.S."/>
            <person name="Hammond S."/>
            <person name="Harley J.L."/>
            <person name="Hart E.A."/>
            <person name="Heath P.D."/>
            <person name="Heathcott R."/>
            <person name="Holmes S.J."/>
            <person name="Howden P.J."/>
            <person name="Howe K.L."/>
            <person name="Howell G.R."/>
            <person name="Huckle E."/>
            <person name="Humphray S.J."/>
            <person name="Humphries M.D."/>
            <person name="Hunt A.R."/>
            <person name="Johnson C.M."/>
            <person name="Joy A.A."/>
            <person name="Kay M."/>
            <person name="Keenan S.J."/>
            <person name="Kimberley A.M."/>
            <person name="King A."/>
            <person name="Laird G.K."/>
            <person name="Langford C."/>
            <person name="Lawlor S."/>
            <person name="Leongamornlert D.A."/>
            <person name="Leversha M."/>
            <person name="Lloyd C.R."/>
            <person name="Lloyd D.M."/>
            <person name="Loveland J.E."/>
            <person name="Lovell J."/>
            <person name="Martin S."/>
            <person name="Mashreghi-Mohammadi M."/>
            <person name="Maslen G.L."/>
            <person name="Matthews L."/>
            <person name="McCann O.T."/>
            <person name="McLaren S.J."/>
            <person name="McLay K."/>
            <person name="McMurray A."/>
            <person name="Moore M.J.F."/>
            <person name="Mullikin J.C."/>
            <person name="Niblett D."/>
            <person name="Nickerson T."/>
            <person name="Novik K.L."/>
            <person name="Oliver K."/>
            <person name="Overton-Larty E.K."/>
            <person name="Parker A."/>
            <person name="Patel R."/>
            <person name="Pearce A.V."/>
            <person name="Peck A.I."/>
            <person name="Phillimore B.J.C.T."/>
            <person name="Phillips S."/>
            <person name="Plumb R.W."/>
            <person name="Porter K.M."/>
            <person name="Ramsey Y."/>
            <person name="Ranby S.A."/>
            <person name="Rice C.M."/>
            <person name="Ross M.T."/>
            <person name="Searle S.M."/>
            <person name="Sehra H.K."/>
            <person name="Sheridan E."/>
            <person name="Skuce C.D."/>
            <person name="Smith S."/>
            <person name="Smith M."/>
            <person name="Spraggon L."/>
            <person name="Squares S.L."/>
            <person name="Steward C.A."/>
            <person name="Sycamore N."/>
            <person name="Tamlyn-Hall G."/>
            <person name="Tester J."/>
            <person name="Theaker A.J."/>
            <person name="Thomas D.W."/>
            <person name="Thorpe A."/>
            <person name="Tracey A."/>
            <person name="Tromans A."/>
            <person name="Tubby B."/>
            <person name="Wall M."/>
            <person name="Wallis J.M."/>
            <person name="West A.P."/>
            <person name="White S.S."/>
            <person name="Whitehead S.L."/>
            <person name="Whittaker H."/>
            <person name="Wild A."/>
            <person name="Willey D.J."/>
            <person name="Wilmer T.E."/>
            <person name="Wood J.M."/>
            <person name="Wray P.W."/>
            <person name="Wyatt J.C."/>
            <person name="Young L."/>
            <person name="Younger R.M."/>
            <person name="Bentley D.R."/>
            <person name="Coulson A."/>
            <person name="Durbin R.M."/>
            <person name="Hubbard T."/>
            <person name="Sulston J.E."/>
            <person name="Dunham I."/>
            <person name="Rogers J."/>
            <person name="Beck S."/>
        </authorList>
    </citation>
    <scope>NUCLEOTIDE SEQUENCE [LARGE SCALE GENOMIC DNA]</scope>
</reference>
<reference key="6">
    <citation type="journal article" date="2004" name="Genome Res.">
        <title>The status, quality, and expansion of the NIH full-length cDNA project: the Mammalian Gene Collection (MGC).</title>
        <authorList>
            <consortium name="The MGC Project Team"/>
        </authorList>
    </citation>
    <scope>NUCLEOTIDE SEQUENCE [LARGE SCALE MRNA]</scope>
    <source>
        <tissue>Brain</tissue>
        <tissue>Muscle</tissue>
        <tissue>Pancreas</tissue>
        <tissue>PNS</tissue>
        <tissue>Skin</tissue>
    </source>
</reference>
<reference key="7">
    <citation type="journal article" date="1989" name="Proc. Natl. Acad. Sci. U.S.A.">
        <title>Human major histocompatibility complex contains genes for the major heat shock protein HSP70.</title>
        <authorList>
            <person name="Sargent C.A."/>
            <person name="Dunham I."/>
            <person name="Trowsdale J."/>
            <person name="Campbell R.D."/>
        </authorList>
    </citation>
    <scope>NUCLEOTIDE SEQUENCE [GENOMIC DNA] OF 360-424</scope>
</reference>
<reference key="8">
    <citation type="submission" date="2009-03" db="UniProtKB">
        <authorList>
            <person name="Bienvenut W.V."/>
            <person name="Waridel P."/>
            <person name="Quadroni M."/>
        </authorList>
    </citation>
    <scope>PROTEIN SEQUENCE OF 4-49; 57-71; 77-155; 160-187; 221-247; 273-311; 326-342; 349-357; 362-416; 424-447; 459-469; 510-517; 540-550; 574-595 AND 598-641</scope>
    <scope>IDENTIFICATION BY MASS SPECTROMETRY</scope>
    <source>
        <tissue>Embryonic kidney</tissue>
    </source>
</reference>
<reference key="9">
    <citation type="submission" date="2008-12" db="UniProtKB">
        <authorList>
            <person name="Lubec G."/>
            <person name="Afjehi-Sadat L."/>
            <person name="Chen W.-Q."/>
            <person name="Sun Y."/>
        </authorList>
    </citation>
    <scope>PROTEIN SEQUENCE OF 37-49; 57-71; 78-88; 113-126; 160-187; 221-247; 302-311; 329-342; 349-357; 362-384; 540-550 AND 574-589</scope>
    <scope>IDENTIFICATION BY MASS SPECTROMETRY</scope>
    <source>
        <tissue>Brain</tissue>
        <tissue>Cajal-Retzius cell</tissue>
        <tissue>Fetal brain cortex</tissue>
    </source>
</reference>
<reference key="10">
    <citation type="journal article" date="2013" name="PLoS Genet.">
        <title>A newly uncovered group of distantly related lysine methyltransferases preferentially interact with molecular chaperones to regulate their activity.</title>
        <authorList>
            <person name="Cloutier P."/>
            <person name="Lavallee-Adam M."/>
            <person name="Faubert D."/>
            <person name="Blanchette M."/>
            <person name="Coulombe B."/>
        </authorList>
    </citation>
    <scope>PROTEIN SEQUENCE OF 551-567</scope>
    <scope>METHYLATION AT LYS-561</scope>
    <scope>MUTAGENESIS OF LYS-561</scope>
    <scope>IDENTIFICATION BY MASS SPECTROMETRY</scope>
</reference>
<reference key="11">
    <citation type="journal article" date="2001" name="J. Biol. Chem.">
        <title>Stable association of hsp90 and p23, but Not hsp70, with active human telomerase.</title>
        <authorList>
            <person name="Forsythe H.L."/>
            <person name="Jarvis J.L."/>
            <person name="Turner J.W."/>
            <person name="Elmore L.W."/>
            <person name="Holt S.E."/>
        </authorList>
    </citation>
    <scope>INTERACTION WITH TERT</scope>
</reference>
<reference key="12">
    <citation type="journal article" date="2003" name="EMBO J.">
        <title>Cofactor Tpr2 combines two TPR domains and a J domain to regulate the Hsp70/Hsp90 chaperone system.</title>
        <authorList>
            <person name="Brychzy A."/>
            <person name="Rein T."/>
            <person name="Winklhofer K.F."/>
            <person name="Hartl F.U."/>
            <person name="Young J.C."/>
            <person name="Obermann W.M."/>
        </authorList>
    </citation>
    <scope>INTERACTION WITH DNAJC7</scope>
</reference>
<reference key="13">
    <citation type="journal article" date="2005" name="Biochem. Biophys. Res. Commun.">
        <title>Phosphorylation and binding partner analysis of the TSC1-TSC2 complex.</title>
        <authorList>
            <person name="Nellist M."/>
            <person name="Burgers P.C."/>
            <person name="van den Ouweland A.M.W."/>
            <person name="Halley D.J.J."/>
            <person name="Luider T.M."/>
        </authorList>
    </citation>
    <scope>INTERACTION WITH TSC2</scope>
    <scope>IDENTIFICATION BY MASS SPECTROMETRY</scope>
</reference>
<reference key="14">
    <citation type="journal article" date="2005" name="Biochem. J.">
        <title>Human protein phosphatase 5 dissociates from heat-shock proteins and is proteolytically activated in response to arachidonic acid and the microtubule-depolymerizing drug nocodazole.</title>
        <authorList>
            <person name="Zeke T."/>
            <person name="Morrice N."/>
            <person name="Vazquez-Martin C."/>
            <person name="Cohen P.T."/>
        </authorList>
    </citation>
    <scope>INTERACTION WITH PPP5C</scope>
    <scope>IDENTIFICATION BY MASS SPECTROMETRY</scope>
</reference>
<reference key="15">
    <citation type="journal article" date="2006" name="Cell">
        <title>Global, in vivo, and site-specific phosphorylation dynamics in signaling networks.</title>
        <authorList>
            <person name="Olsen J.V."/>
            <person name="Blagoev B."/>
            <person name="Gnad F."/>
            <person name="Macek B."/>
            <person name="Kumar C."/>
            <person name="Mortensen P."/>
            <person name="Mann M."/>
        </authorList>
    </citation>
    <scope>IDENTIFICATION BY MASS SPECTROMETRY [LARGE SCALE ANALYSIS]</scope>
    <source>
        <tissue>Cervix carcinoma</tissue>
    </source>
</reference>
<reference key="16">
    <citation type="journal article" date="2006" name="DNA Cell Biol.">
        <title>The disordered amino-terminus of SIMPL interacts with members of the 70-kDa heat-shock protein family.</title>
        <authorList>
            <person name="Haag Breese E."/>
            <person name="Uversky V.N."/>
            <person name="Georgiadis M.M."/>
            <person name="Harrington M.A."/>
        </authorList>
    </citation>
    <scope>INTERACTION WITH IRAK1BP1</scope>
    <scope>IDENTIFICATION BY MASS SPECTROMETRY</scope>
</reference>
<reference key="17">
    <citation type="journal article" date="2006" name="J. Virol.">
        <title>The peptide-binding and ATPase domains of recombinant hsc70 are required to interact with rotavirus and reduce its infectivity.</title>
        <authorList>
            <person name="Perez-Vargas J."/>
            <person name="Romero P."/>
            <person name="Lopez S."/>
            <person name="Arias C.F."/>
        </authorList>
    </citation>
    <scope>FUNCTION AS A RECEPTOR FOR ROTAVIRUS A</scope>
</reference>
<reference key="18">
    <citation type="journal article" date="2007" name="Biochem. Biophys. Res. Commun.">
        <title>HDJC9, a novel human type C DnaJ/HSP40 member interacts with and cochaperones HSP70 through the J domain.</title>
        <authorList>
            <person name="Han C."/>
            <person name="Chen T."/>
            <person name="Li N."/>
            <person name="Yang M."/>
            <person name="Wan T."/>
            <person name="Cao X."/>
        </authorList>
    </citation>
    <scope>INTERACTION WITH DNAJC9</scope>
</reference>
<reference key="19">
    <citation type="journal article" date="2007" name="Mol. Cell. Proteomics">
        <title>Molecular composition of IMP1 ribonucleoprotein granules.</title>
        <authorList>
            <person name="Joeson L."/>
            <person name="Vikesaa J."/>
            <person name="Krogh A."/>
            <person name="Nielsen L.K."/>
            <person name="Hansen T."/>
            <person name="Borup R."/>
            <person name="Johnsen A.H."/>
            <person name="Christiansen J."/>
            <person name="Nielsen F.C."/>
        </authorList>
    </citation>
    <scope>IDENTIFICATION IN A MRNP GRANULE COMPLEX</scope>
    <scope>IDENTIFICATION BY MASS SPECTROMETRY</scope>
    <scope>SUBCELLULAR LOCATION</scope>
</reference>
<reference key="20">
    <citation type="journal article" date="2008" name="Biochemistry">
        <title>Role of the cochaperone Tpr2 in Hsp90 chaperoning.</title>
        <authorList>
            <person name="Moffatt N.S."/>
            <person name="Bruinsma E."/>
            <person name="Uhl C."/>
            <person name="Obermann W.M."/>
            <person name="Toft D."/>
        </authorList>
    </citation>
    <scope>INTERACTION WITH DNAJC7</scope>
</reference>
<reference key="21">
    <citation type="journal article" date="2008" name="Mol. Cell">
        <title>Kinase-selective enrichment enables quantitative phosphoproteomics of the kinome across the cell cycle.</title>
        <authorList>
            <person name="Daub H."/>
            <person name="Olsen J.V."/>
            <person name="Bairlein M."/>
            <person name="Gnad F."/>
            <person name="Oppermann F.S."/>
            <person name="Korner R."/>
            <person name="Greff Z."/>
            <person name="Keri G."/>
            <person name="Stemmann O."/>
            <person name="Mann M."/>
        </authorList>
    </citation>
    <scope>IDENTIFICATION BY MASS SPECTROMETRY [LARGE SCALE ANALYSIS]</scope>
    <source>
        <tissue>Cervix carcinoma</tissue>
    </source>
</reference>
<reference key="22">
    <citation type="journal article" date="2009" name="Anal. Chem.">
        <title>Lys-N and trypsin cover complementary parts of the phosphoproteome in a refined SCX-based approach.</title>
        <authorList>
            <person name="Gauci S."/>
            <person name="Helbig A.O."/>
            <person name="Slijper M."/>
            <person name="Krijgsveld J."/>
            <person name="Heck A.J."/>
            <person name="Mohammed S."/>
        </authorList>
    </citation>
    <scope>ACETYLATION [LARGE SCALE ANALYSIS] AT ALA-2</scope>
    <scope>CLEAVAGE OF INITIATOR METHIONINE [LARGE SCALE ANALYSIS]</scope>
    <scope>IDENTIFICATION BY MASS SPECTROMETRY [LARGE SCALE ANALYSIS]</scope>
</reference>
<reference key="23">
    <citation type="journal article" date="2009" name="Science">
        <title>Lysine acetylation targets protein complexes and co-regulates major cellular functions.</title>
        <authorList>
            <person name="Choudhary C."/>
            <person name="Kumar C."/>
            <person name="Gnad F."/>
            <person name="Nielsen M.L."/>
            <person name="Rehman M."/>
            <person name="Walther T.C."/>
            <person name="Olsen J.V."/>
            <person name="Mann M."/>
        </authorList>
    </citation>
    <scope>ACETYLATION [LARGE SCALE ANALYSIS] AT LYS-108; LYS-246 AND LYS-348</scope>
    <scope>IDENTIFICATION BY MASS SPECTROMETRY [LARGE SCALE ANALYSIS]</scope>
</reference>
<reference key="24">
    <citation type="journal article" date="2010" name="J. Biol. Chem.">
        <title>Hsp70 interacts with the retroviral restriction factor TRIM5alpha and assists the folding of TRIM5alpha.</title>
        <authorList>
            <person name="Hwang C.Y."/>
            <person name="Holl J."/>
            <person name="Rajan D."/>
            <person name="Lee Y."/>
            <person name="Kim S."/>
            <person name="Um M."/>
            <person name="Kwon K.S."/>
            <person name="Song B."/>
        </authorList>
    </citation>
    <scope>INTERACTION WITH TRIM5</scope>
</reference>
<reference key="25">
    <citation type="journal article" date="2010" name="Sci. Signal.">
        <title>Quantitative phosphoproteomics reveals widespread full phosphorylation site occupancy during mitosis.</title>
        <authorList>
            <person name="Olsen J.V."/>
            <person name="Vermeulen M."/>
            <person name="Santamaria A."/>
            <person name="Kumar C."/>
            <person name="Miller M.L."/>
            <person name="Jensen L.J."/>
            <person name="Gnad F."/>
            <person name="Cox J."/>
            <person name="Jensen T.S."/>
            <person name="Nigg E.A."/>
            <person name="Brunak S."/>
            <person name="Mann M."/>
        </authorList>
    </citation>
    <scope>PHOSPHORYLATION [LARGE SCALE ANALYSIS] AT SER-631; SER-633 AND THR-636</scope>
    <scope>IDENTIFICATION BY MASS SPECTROMETRY [LARGE SCALE ANALYSIS]</scope>
    <source>
        <tissue>Cervix carcinoma</tissue>
    </source>
</reference>
<reference key="26">
    <citation type="journal article" date="2011" name="BMC Syst. Biol.">
        <title>Initial characterization of the human central proteome.</title>
        <authorList>
            <person name="Burkard T.R."/>
            <person name="Planyavsky M."/>
            <person name="Kaupe I."/>
            <person name="Breitwieser F.P."/>
            <person name="Buerckstuemmer T."/>
            <person name="Bennett K.L."/>
            <person name="Superti-Furga G."/>
            <person name="Colinge J."/>
        </authorList>
    </citation>
    <scope>IDENTIFICATION BY MASS SPECTROMETRY [LARGE SCALE ANALYSIS]</scope>
</reference>
<reference key="27">
    <citation type="journal article" date="2011" name="J. Biol. Chem.">
        <title>ChChd3, an inner mitochondrial membrane protein, is essential for maintaining crista integrity and mitochondrial function.</title>
        <authorList>
            <person name="Darshi M."/>
            <person name="Mendiola V.L."/>
            <person name="Mackey M.R."/>
            <person name="Murphy A.N."/>
            <person name="Koller A."/>
            <person name="Perkins G.A."/>
            <person name="Ellisman M.H."/>
            <person name="Taylor S.S."/>
        </authorList>
    </citation>
    <scope>INTERACTION WITH CHCHD3</scope>
</reference>
<reference key="28">
    <citation type="journal article" date="2012" name="J. Biol. Chem.">
        <title>Nucleophosmin (NPM1/B23) interacts with activating transcription factor 5 (ATF5) protein and promotes proteasome- and caspase-dependent ATF5 degradation in hepatocellular carcinoma cells.</title>
        <authorList>
            <person name="Liu X."/>
            <person name="Liu D."/>
            <person name="Qian D."/>
            <person name="Dai J."/>
            <person name="An Y."/>
            <person name="Jiang S."/>
            <person name="Stanley B."/>
            <person name="Yang J."/>
            <person name="Wang B."/>
            <person name="Liu X."/>
            <person name="Liu D.X."/>
        </authorList>
    </citation>
    <scope>FUNCTION</scope>
    <scope>INTERACTION WITH ATF5</scope>
</reference>
<reference key="29">
    <citation type="journal article" date="2012" name="J. Proteome Res.">
        <title>Resveratrol-induced changes of the human adipocyte secretion profile.</title>
        <authorList>
            <person name="Rosenow A."/>
            <person name="Noben J.P."/>
            <person name="Jocken J."/>
            <person name="Kallendrusch S."/>
            <person name="Fischer-Posovszky P."/>
            <person name="Mariman E.C."/>
            <person name="Renes J."/>
        </authorList>
    </citation>
    <scope>IDENTIFICATION BY MASS SPECTROMETRY [LARGE SCALE ANALYSIS]</scope>
</reference>
<reference key="30">
    <citation type="journal article" date="2013" name="Immunity">
        <title>The ubiquitin ligase Stub1 negatively modulates regulatory T cell suppressive activity by promoting degradation of the transcription factor Foxp3.</title>
        <authorList>
            <person name="Chen Z."/>
            <person name="Barbi J."/>
            <person name="Bu S."/>
            <person name="Yang H.Y."/>
            <person name="Li Z."/>
            <person name="Gao Y."/>
            <person name="Jinasena D."/>
            <person name="Fu J."/>
            <person name="Lin F."/>
            <person name="Chen C."/>
            <person name="Zhang J."/>
            <person name="Yu N."/>
            <person name="Li X."/>
            <person name="Shan Z."/>
            <person name="Nie J."/>
            <person name="Gao Z."/>
            <person name="Tian H."/>
            <person name="Li Y."/>
            <person name="Yao Z."/>
            <person name="Zheng Y."/>
            <person name="Park B.V."/>
            <person name="Pan Z."/>
            <person name="Zhang J."/>
            <person name="Dang E."/>
            <person name="Li Z."/>
            <person name="Wang H."/>
            <person name="Luo W."/>
            <person name="Li L."/>
            <person name="Semenza G.L."/>
            <person name="Zheng S.G."/>
            <person name="Loser K."/>
            <person name="Tsun A."/>
            <person name="Greene M.I."/>
            <person name="Pardoll D.M."/>
            <person name="Pan F."/>
            <person name="Li B."/>
        </authorList>
    </citation>
    <scope>IDENTIFICATION BY MASS SPECTROMETRY</scope>
    <scope>FUNCTION</scope>
    <scope>INTERACTION WITH FOXP3</scope>
</reference>
<reference key="31">
    <citation type="journal article" date="2013" name="J. Biol. Chem.">
        <title>Identification and characterization of a novel human methyltransferase modulating Hsp70 function through lysine methylation.</title>
        <authorList>
            <person name="Jakobsson M.E."/>
            <person name="Moen A."/>
            <person name="Bousset L."/>
            <person name="Egge-Jacobsen W."/>
            <person name="Kernstock S."/>
            <person name="Melki R."/>
            <person name="Falnes P.O."/>
        </authorList>
    </citation>
    <scope>METHYLATION AT LYS-561</scope>
    <scope>MUTAGENESIS OF LYS-561</scope>
    <scope>INTERACTION WITH METTL21A</scope>
</reference>
<reference key="32">
    <citation type="journal article" date="2013" name="J. Proteome Res.">
        <title>Toward a comprehensive characterization of a human cancer cell phosphoproteome.</title>
        <authorList>
            <person name="Zhou H."/>
            <person name="Di Palma S."/>
            <person name="Preisinger C."/>
            <person name="Peng M."/>
            <person name="Polat A.N."/>
            <person name="Heck A.J."/>
            <person name="Mohammed S."/>
        </authorList>
    </citation>
    <scope>IDENTIFICATION BY MASS SPECTROMETRY [LARGE SCALE ANALYSIS]</scope>
    <source>
        <tissue>Cervix carcinoma</tissue>
        <tissue>Erythroleukemia</tissue>
    </source>
</reference>
<reference key="33">
    <citation type="journal article" date="2013" name="Nature">
        <title>High-content genome-wide RNAi screens identify regulators of parkin upstream of mitophagy.</title>
        <authorList>
            <person name="Hasson S.A."/>
            <person name="Kane L.A."/>
            <person name="Yamano K."/>
            <person name="Huang C.H."/>
            <person name="Sliter D.A."/>
            <person name="Buehler E."/>
            <person name="Wang C."/>
            <person name="Heman-Ackah S.M."/>
            <person name="Hessa T."/>
            <person name="Guha R."/>
            <person name="Martin S.E."/>
            <person name="Youle R.J."/>
        </authorList>
    </citation>
    <scope>INTERACTION WITH PRKN</scope>
</reference>
<reference key="34">
    <citation type="journal article" date="2013" name="Trends Biochem. Sci.">
        <title>Hsp70 chaperone dynamics and molecular mechanism.</title>
        <authorList>
            <person name="Mayer M.P."/>
        </authorList>
    </citation>
    <scope>REVIEW</scope>
</reference>
<reference key="35">
    <citation type="journal article" date="2014" name="Biochem. Biophys. Res. Commun.">
        <title>Hsp70 and Hsp90 oppositely regulate TGF-beta signaling through CHIP/Stub1.</title>
        <authorList>
            <person name="Shang Y."/>
            <person name="Xu X."/>
            <person name="Duan X."/>
            <person name="Guo J."/>
            <person name="Wang Y."/>
            <person name="Ren F."/>
            <person name="He D."/>
            <person name="Chang Z."/>
        </authorList>
    </citation>
    <scope>FUNCTION</scope>
    <scope>INTERACTION WITH STUB1 AND SMAD3</scope>
</reference>
<reference key="36">
    <citation type="journal article" date="2014" name="J. Biol. Chem.">
        <title>Binding of human nucleotide exchange factors to heat shock protein 70 (Hsp70) generates functionally distinct complexes in vitro.</title>
        <authorList>
            <person name="Rauch J.N."/>
            <person name="Gestwicki J.E."/>
        </authorList>
    </citation>
    <scope>FUNCTION</scope>
    <scope>INTERACTION WITH BAG1; BAG2; BAG3 AND HSPH1</scope>
</reference>
<reference key="37">
    <citation type="journal article" date="2014" name="J. Biol. Chem.">
        <title>The molecular chaperone HSP70 binds to and stabilizes NOD2, an important protein involved in Crohn disease.</title>
        <authorList>
            <person name="Mohanan V."/>
            <person name="Grimes C.L."/>
        </authorList>
    </citation>
    <scope>INTERACTION WITH NOD2</scope>
</reference>
<reference key="38">
    <citation type="journal article" date="2014" name="J. Proteomics">
        <title>An enzyme assisted RP-RPLC approach for in-depth analysis of human liver phosphoproteome.</title>
        <authorList>
            <person name="Bian Y."/>
            <person name="Song C."/>
            <person name="Cheng K."/>
            <person name="Dong M."/>
            <person name="Wang F."/>
            <person name="Huang J."/>
            <person name="Sun D."/>
            <person name="Wang L."/>
            <person name="Ye M."/>
            <person name="Zou H."/>
        </authorList>
    </citation>
    <scope>IDENTIFICATION BY MASS SPECTROMETRY [LARGE SCALE ANALYSIS]</scope>
    <source>
        <tissue>Liver</tissue>
    </source>
</reference>
<reference key="39">
    <citation type="journal article" date="2014" name="Mol. Cell. Proteomics">
        <title>Immunoaffinity enrichment and mass spectrometry analysis of protein methylation.</title>
        <authorList>
            <person name="Guo A."/>
            <person name="Gu H."/>
            <person name="Zhou J."/>
            <person name="Mulhern D."/>
            <person name="Wang Y."/>
            <person name="Lee K.A."/>
            <person name="Yang V."/>
            <person name="Aguiar M."/>
            <person name="Kornhauser J."/>
            <person name="Jia X."/>
            <person name="Ren J."/>
            <person name="Beausoleil S.A."/>
            <person name="Silva J.C."/>
            <person name="Vemulapalli V."/>
            <person name="Bedford M.T."/>
            <person name="Comb M.J."/>
        </authorList>
    </citation>
    <scope>METHYLATION [LARGE SCALE ANALYSIS] AT ARG-469 AND LYS-561</scope>
    <scope>IDENTIFICATION BY MASS SPECTROMETRY [LARGE SCALE ANALYSIS]</scope>
    <source>
        <tissue>Colon carcinoma</tissue>
    </source>
</reference>
<reference key="40">
    <citation type="journal article" date="2015" name="Proteomics">
        <title>N-terminome analysis of the human mitochondrial proteome.</title>
        <authorList>
            <person name="Vaca Jacome A.S."/>
            <person name="Rabilloud T."/>
            <person name="Schaeffer-Reiss C."/>
            <person name="Rompais M."/>
            <person name="Ayoub D."/>
            <person name="Lane L."/>
            <person name="Bairoch A."/>
            <person name="Van Dorsselaer A."/>
            <person name="Carapito C."/>
        </authorList>
    </citation>
    <scope>IDENTIFICATION BY MASS SPECTROMETRY [LARGE SCALE ANALYSIS]</scope>
</reference>
<reference key="41">
    <citation type="journal article" date="2016" name="Biochem. Biophys. Res. Commun.">
        <title>A novel nuclear DnaJ protein, DNAJC8, can suppress the formation of spinocerebellar ataxia 3 polyglutamine aggregation in a J-domain independent manner.</title>
        <authorList>
            <person name="Ito N."/>
            <person name="Kamiguchi K."/>
            <person name="Nakanishi K."/>
            <person name="Sokolovskya A."/>
            <person name="Hirohashi Y."/>
            <person name="Tamura Y."/>
            <person name="Murai A."/>
            <person name="Yamamoto E."/>
            <person name="Kanaseki T."/>
            <person name="Tsukahara T."/>
            <person name="Kochin V."/>
            <person name="Chiba S."/>
            <person name="Shimohama S."/>
            <person name="Sato N."/>
            <person name="Torigoe T."/>
        </authorList>
    </citation>
    <scope>INTERACTION WITH DNAJC8</scope>
</reference>
<reference key="42">
    <citation type="journal article" date="2016" name="Cell Stress Chaperones">
        <title>The human HSP70 family of chaperones: where do we stand?</title>
        <authorList>
            <person name="Radons J."/>
        </authorList>
    </citation>
    <scope>REVIEW</scope>
</reference>
<reference key="43">
    <citation type="journal article" date="2016" name="Cell. Mol. Life Sci.">
        <title>HSP70 regulates the function of mitotic centrosomes.</title>
        <authorList>
            <person name="Fang C.T."/>
            <person name="Kuo H.H."/>
            <person name="Pan T.S."/>
            <person name="Yu F.C."/>
            <person name="Yih L.H."/>
        </authorList>
    </citation>
    <scope>FUNCTION</scope>
    <scope>INTERACTION WITH NEDD1</scope>
    <scope>SUBCELLULAR LOCATION</scope>
</reference>
<reference key="44">
    <citation type="journal article" date="2016" name="Nat. Commun.">
        <title>ARD1-mediated Hsp70 acetylation balances stress-induced protein refolding and degradation.</title>
        <authorList>
            <person name="Seo J.H."/>
            <person name="Park J.H."/>
            <person name="Lee E.J."/>
            <person name="Vo T.T."/>
            <person name="Choi H."/>
            <person name="Kim J.Y."/>
            <person name="Jang J.K."/>
            <person name="Wee H.J."/>
            <person name="Lee H.S."/>
            <person name="Jang S.H."/>
            <person name="Park Z.Y."/>
            <person name="Jeong J."/>
            <person name="Lee K.J."/>
            <person name="Seok S.H."/>
            <person name="Park J.Y."/>
            <person name="Lee B.J."/>
            <person name="Lee M.N."/>
            <person name="Oh G.T."/>
            <person name="Kim K.W."/>
        </authorList>
    </citation>
    <scope>FUNCTION</scope>
    <scope>ACETYLATION AT LYS-77</scope>
    <scope>MUTAGENESIS OF LYS-77</scope>
    <scope>INTERACTION WITH NAA10; HSP40; HOPX; STUB1; HSP90 AND HDAC4</scope>
</reference>
<reference key="45">
    <citation type="journal article" date="2021" name="Mol. Cell">
        <title>DNAJC9 integrates heat shock molecular chaperones into the histone chaperone network.</title>
        <authorList>
            <person name="Hammond C.M."/>
            <person name="Bao H."/>
            <person name="Hendriks I.A."/>
            <person name="Carraro M."/>
            <person name="Garcia-Nieto A."/>
            <person name="Liu Y."/>
            <person name="Reveron-Gomez N."/>
            <person name="Spanos C."/>
            <person name="Chen L."/>
            <person name="Rappsilber J."/>
            <person name="Nielsen M.L."/>
            <person name="Patel D.J."/>
            <person name="Huang H."/>
            <person name="Groth A."/>
        </authorList>
    </citation>
    <scope>INTERACTION WITH DNJC9</scope>
</reference>
<reference key="46">
    <citation type="journal article" date="1999" name="Acta Crystallogr. D">
        <title>Structure of a new crystal form of human hsp70 ATPase domain.</title>
        <authorList>
            <person name="Osipiuk J."/>
            <person name="Walsh M.A."/>
            <person name="Freeman B.C."/>
            <person name="Morimoto R.I."/>
            <person name="Joachimiak A."/>
        </authorList>
    </citation>
    <scope>X-RAY CRYSTALLOGRAPHY (2.3 ANGSTROMS) OF 1-382 IN COMPLEX WITH ADP</scope>
    <scope>ATP-BINDING</scope>
</reference>
<reference key="47">
    <citation type="journal article" date="2010" name="Acta Crystallogr. D">
        <title>Direct inter-subdomain interactions switch between the closed and open forms of the Hsp70 nucleotide-binding domain in the nucleotide-free state.</title>
        <authorList>
            <person name="Shida M."/>
            <person name="Arakawa A."/>
            <person name="Ishii R."/>
            <person name="Kishishita S."/>
            <person name="Takagi T."/>
            <person name="Kukimoto-Niino M."/>
            <person name="Sugano S."/>
            <person name="Tanaka A."/>
            <person name="Shirouzu M."/>
            <person name="Yokoyama S."/>
        </authorList>
    </citation>
    <scope>X-RAY CRYSTALLOGRAPHY (1.77 ANGSTROMS) OF 389-641 IN COMPLEX WITH ATP ANALOG</scope>
    <scope>ATP-BINDING</scope>
</reference>
<reference key="48">
    <citation type="journal article" date="2010" name="PLoS ONE">
        <title>Crystal structures of the ATPase domains of four human Hsp70 isoforms: HSPA1L/Hsp70-hom, HSPA2/Hsp70-2, HSPA6/Hsp70B', and HSPA5/BiP/GRP78.</title>
        <authorList>
            <person name="Wisniewska M."/>
            <person name="Karlberg T."/>
            <person name="Lehtio L."/>
            <person name="Johansson I."/>
            <person name="Kotenyova T."/>
            <person name="Moche M."/>
            <person name="Schuler H."/>
        </authorList>
    </citation>
    <scope>X-RAY CRYSTALLOGRAPHY (2.14 ANGSTROMS) OF 1-387 IN COMPLEX WITH ADP</scope>
    <scope>ATP-BINDING</scope>
</reference>
<reference key="49">
    <citation type="journal article" date="2010" name="Structure">
        <title>The C-terminal BAG domain of BAG5 induces conformational changes of the Hsp70 nucleotide-binding domain for ADP-ATP exchange.</title>
        <authorList>
            <person name="Arakawa A."/>
            <person name="Handa N."/>
            <person name="Ohsawa N."/>
            <person name="Shida M."/>
            <person name="Kigawa T."/>
            <person name="Hayashi F."/>
            <person name="Shirouzu M."/>
            <person name="Yokoyama S."/>
        </authorList>
    </citation>
    <scope>X-RAY CRYSTALLOGRAPHY (2.3 ANGSTROMS) OF 1-388 IN COMPLEX WITH BAG5</scope>
</reference>
<reference key="50">
    <citation type="journal article" date="2011" name="Protein Sci.">
        <title>Biochemical and structural studies on the high affinity of Hsp70 for ADP.</title>
        <authorList>
            <person name="Arakawa A."/>
            <person name="Handa N."/>
            <person name="Shirouzu M."/>
            <person name="Yokoyama S."/>
        </authorList>
    </citation>
    <scope>X-RAY CRYSTALLOGRAPHY (1.58 ANGSTROMS) OF 1-388</scope>
    <scope>ATP-BINDING</scope>
    <scope>MUTAGENESIS OF ASP-10 AND ASP-199</scope>
</reference>
<name>HS71B_HUMAN</name>
<sequence>MAKAAAIGIDLGTTYSCVGVFQHGKVEIIANDQGNRTTPSYVAFTDTERLIGDAAKNQVALNPQNTVFDAKRLIGRKFGDPVVQSDMKHWPFQVINDGDKPKVQVSYKGETKAFYPEEISSMVLTKMKEIAEAYLGYPVTNAVITVPAYFNDSQRQATKDAGVIAGLNVLRIINEPTAAAIAYGLDRTGKGERNVLIFDLGGGTFDVSILTIDDGIFEVKATAGDTHLGGEDFDNRLVNHFVEEFKRKHKKDISQNKRAVRRLRTACERAKRTLSSSTQASLEIDSLFEGIDFYTSITRARFEELCSDLFRSTLEPVEKALRDAKLDKAQIHDLVLVGGSTRIPKVQKLLQDFFNGRDLNKSINPDEAVAYGAAVQAAILMGDKSENVQDLLLLDVAPLSLGLETAGGVMTALIKRNSTIPTKQTQIFTTYSDNQPGVLIQVYEGERAMTKDNNLLGRFELSGIPPAPRGVPQIEVTFDIDANGILNVTATDKSTGKANKITITNDKGRLSKEEIERMVQEAEKYKAEDEVQRERVSAKNALESYAFNMKSAVEDEGLKGKISEADKKKVLDKCQEVISWLDANTLAEKDEFEHKRKELEQVCNPIISGLYQGAGGPGPGGFGAQGPKGGSGSGPTIEEVD</sequence>
<comment type="function">
    <text evidence="20 23 25 26 29 30 34 37">Molecular chaperone implicated in a wide variety of cellular processes, including protection of the proteome from stress, folding and transport of newly synthesized polypeptides, activation of proteolysis of misfolded proteins and the formation and dissociation of protein complexes. Plays a pivotal role in the protein quality control system, ensuring the correct folding of proteins, the re-folding of misfolded proteins and controlling the targeting of proteins for subsequent degradation. This is achieved through cycles of ATP binding, ATP hydrolysis and ADP release, mediated by co-chaperones. The co-chaperones have been shown to not only regulate different steps of the ATPase cycle, but they also have an individual specificity such that one co-chaperone may promote folding of a substrate while another may promote degradation. The affinity for polypeptides is regulated by its nucleotide bound state. In the ATP-bound form, it has a low affinity for substrate proteins. However, upon hydrolysis of the ATP to ADP, it undergoes a conformational change that increases its affinity for substrate proteins. It goes through repeated cycles of ATP hydrolysis and nucleotide exchange, which permits cycles of substrate binding and release. The co-chaperones are of three types: J-domain co-chaperones such as HSP40s (stimulate ATPase hydrolysis by HSP70), the nucleotide exchange factors (NEF) such as BAG1/2/3 (facilitate conversion of HSP70 from the ADP-bound to the ATP-bound state thereby promoting substrate release), and the TPR domain chaperones such as HOPX and STUB1 (PubMed:24012426, PubMed:24318877, PubMed:26865365). Maintains protein homeostasis during cellular stress through two opposing mechanisms: protein refolding and degradation. Its acetylation/deacetylation state determines whether it functions in protein refolding or protein degradation by controlling the competitive binding of co-chaperones HOPX and STUB1. During the early stress response, the acetylated form binds to HOPX which assists in chaperone-mediated protein refolding, thereafter, it is deacetylated and binds to ubiquitin ligase STUB1 that promotes ubiquitin-mediated protein degradation (PubMed:27708256). Regulates centrosome integrity during mitosis, and is required for the maintenance of a functional mitotic centrosome that supports the assembly of a bipolar mitotic spindle (PubMed:27137183). Enhances STUB1-mediated SMAD3 ubiquitination and degradation and facilitates STUB1-mediated inhibition of TGF-beta signaling (PubMed:24613385). Essential for STUB1-mediated ubiquitination and degradation of FOXP3 in regulatory T-cells (Treg) during inflammation (PubMed:23973223).</text>
</comment>
<comment type="function">
    <text evidence="9">(Microbial infection) In case of rotavirus A infection, serves as a post-attachment receptor for the virus to facilitate entry into the cell.</text>
</comment>
<comment type="subunit">
    <text evidence="3 4 5 7 8 10 11 12 13 14 15 16 17 18 20 22 23 24 25 26 27 28 29 30 31">May be an auxiliary component of the CatSper complex. Identified in a IGF2BP1-dependent mRNP granule complex containing untranslated mRNAs (PubMed:17289661). Interacts with CHCHD3, DNAJC7, IRAK1BP1, PPP5C and TSC2 (PubMed:12853476, PubMed:15383005, PubMed:15963462, PubMed:17233114, PubMed:18620420, PubMed:21081504). Interacts with TERT; the interaction occurs in the absence of the RNA component, TERC, and dissociates once the TERT complex has formed (PubMed:11274138). Interacts with TRIM5 (via B30.2/SPRY domain) (PubMed:20053985). Interacts with METTL21A (PubMed:23921388). Interacts with PRKN (PubMed:24270810). Interacts with FOXP3 (PubMed:23973223). Interacts with NOD2; the interaction enhances NOD2 stability (PubMed:24790089). Interacts with DNAJC9 (via J domain) (PubMed:17182002, PubMed:33857403). Interacts with ATF5; the interaction protects ATF5 from degradation via proteasome-dependent and caspase-dependent processes (PubMed:22528486). Interacts with NAA10, HSP40, HSP90 and HDAC4. The acetylated form and the non-acetylated form interact with HOPX and STUB1 respectively (PubMed:27708256). Interacts with NEDD1 (PubMed:27137183). Interacts (via NBD) with BAG1, BAG2, BAG3 and HSPH1/HSP105 (PubMed:24318877). Interacts with SMAD3 (PubMed:24613385). Interacts with DNAJC8 (PubMed:27133716).</text>
</comment>
<comment type="interaction">
    <interactant intactId="EBI-14100688">
        <id>P0DMV9</id>
    </interactant>
    <interactant intactId="EBI-4303189">
        <id>P55085</id>
        <label>F2RL1</label>
    </interactant>
    <organismsDiffer>false</organismsDiffer>
    <experiments>2</experiments>
</comment>
<comment type="subcellular location">
    <subcellularLocation>
        <location evidence="12">Cytoplasm</location>
    </subcellularLocation>
    <subcellularLocation>
        <location evidence="29">Cytoplasm</location>
        <location evidence="29">Cytoskeleton</location>
        <location evidence="29">Microtubule organizing center</location>
        <location evidence="29">Centrosome</location>
    </subcellularLocation>
    <text>Localized in cytoplasmic mRNP granules containing untranslated mRNAs.</text>
</comment>
<comment type="tissue specificity">
    <text>HSPA1B is testis-specific.</text>
</comment>
<comment type="induction">
    <text>By heat shock.</text>
</comment>
<comment type="domain">
    <text evidence="39 40">The N-terminal nucleotide binding domain (NBD) (also known as the ATPase domain) is responsible for binding and hydrolyzing ATP. The C-terminal substrate-binding domain (SBD) (also known as peptide-binding domain) binds to the client/substrate proteins. The two domains are allosterically coupled so that, when ATP is bound to the NBD, the SBD binds relatively weakly to clients. When ADP is bound in the NBD, a conformational change enhances the affinity of the SBD for client proteins.</text>
</comment>
<comment type="PTM">
    <text evidence="30">In response to cellular stress, acetylated at Lys-77 by NA110 and then gradually deacetylated by HDAC4 at later stages. Acetylation enhances its chaperone activity and also determines whether it will function as a chaperone for protein refolding or degradation by controlling its binding to co-chaperones HOPX and STUB1. The acetylated form and the non-acetylated form bind to HOPX and STUB1 respectively. Acetylation also protects cells against various types of cellular stress.</text>
</comment>
<comment type="similarity">
    <text evidence="38">Belongs to the heat shock protein 70 family.</text>
</comment>
<dbReference type="EMBL" id="M59830">
    <property type="protein sequence ID" value="AAA63227.1"/>
    <property type="molecule type" value="Genomic_DNA"/>
</dbReference>
<dbReference type="EMBL" id="BA000025">
    <property type="protein sequence ID" value="BAB63299.1"/>
    <property type="molecule type" value="Genomic_DNA"/>
</dbReference>
<dbReference type="EMBL" id="AF134726">
    <property type="protein sequence ID" value="AAD21815.1"/>
    <property type="molecule type" value="Genomic_DNA"/>
</dbReference>
<dbReference type="EMBL" id="DQ388429">
    <property type="protein sequence ID" value="ABD48956.1"/>
    <property type="molecule type" value="Genomic_DNA"/>
</dbReference>
<dbReference type="EMBL" id="AL671762">
    <property type="status" value="NOT_ANNOTATED_CDS"/>
    <property type="molecule type" value="Genomic_DNA"/>
</dbReference>
<dbReference type="EMBL" id="BC009322">
    <property type="protein sequence ID" value="AAH09322.1"/>
    <property type="molecule type" value="mRNA"/>
</dbReference>
<dbReference type="EMBL" id="BC018740">
    <property type="protein sequence ID" value="AAH18740.1"/>
    <property type="molecule type" value="mRNA"/>
</dbReference>
<dbReference type="EMBL" id="BC057397">
    <property type="protein sequence ID" value="AAH57397.1"/>
    <property type="molecule type" value="mRNA"/>
</dbReference>
<dbReference type="EMBL" id="BC063507">
    <property type="protein sequence ID" value="AAH63507.1"/>
    <property type="molecule type" value="mRNA"/>
</dbReference>
<dbReference type="EMBL" id="M24744">
    <property type="protein sequence ID" value="AAA59845.1"/>
    <property type="molecule type" value="Genomic_DNA"/>
</dbReference>
<dbReference type="CCDS" id="CCDS34415.1"/>
<dbReference type="PIR" id="A29160">
    <property type="entry name" value="A29160"/>
</dbReference>
<dbReference type="PIR" id="A45871">
    <property type="entry name" value="A45871"/>
</dbReference>
<dbReference type="PIR" id="I59139">
    <property type="entry name" value="I59139"/>
</dbReference>
<dbReference type="PIR" id="I79540">
    <property type="entry name" value="I79540"/>
</dbReference>
<dbReference type="RefSeq" id="NP_005337.2">
    <property type="nucleotide sequence ID" value="NM_005346.6"/>
</dbReference>
<dbReference type="PDB" id="4J8F">
    <property type="method" value="X-ray"/>
    <property type="resolution" value="2.70 A"/>
    <property type="chains" value="A=1-382, A=384-600"/>
</dbReference>
<dbReference type="PDB" id="6FDT">
    <property type="method" value="NMR"/>
    <property type="chains" value="B=633-641"/>
</dbReference>
<dbReference type="PDB" id="7F4X">
    <property type="method" value="Other"/>
    <property type="resolution" value="1.60 A"/>
    <property type="chains" value="A=3-380"/>
</dbReference>
<dbReference type="PDB" id="7F4Z">
    <property type="method" value="X-ray"/>
    <property type="resolution" value="1.80 A"/>
    <property type="chains" value="A=3-380"/>
</dbReference>
<dbReference type="PDB" id="7F50">
    <property type="method" value="X-ray"/>
    <property type="resolution" value="1.70 A"/>
    <property type="chains" value="A=3-380"/>
</dbReference>
<dbReference type="PDBsum" id="4J8F"/>
<dbReference type="PDBsum" id="6FDT"/>
<dbReference type="PDBsum" id="7F4X"/>
<dbReference type="PDBsum" id="7F4Z"/>
<dbReference type="PDBsum" id="7F50"/>
<dbReference type="BMRB" id="P0DMV9"/>
<dbReference type="SMR" id="P0DMV9"/>
<dbReference type="CORUM" id="P0DMV9"/>
<dbReference type="FunCoup" id="P0DMV9">
    <property type="interactions" value="1782"/>
</dbReference>
<dbReference type="IntAct" id="P0DMV9">
    <property type="interactions" value="59"/>
</dbReference>
<dbReference type="MINT" id="P0DMV9"/>
<dbReference type="ChEMBL" id="CHEMBL3885585"/>
<dbReference type="DrugBank" id="DB06258">
    <property type="generic name" value="Bimoclomol"/>
</dbReference>
<dbReference type="DrugBank" id="DB08846">
    <property type="generic name" value="Ellagic acid"/>
</dbReference>
<dbReference type="DrugBank" id="DB05444">
    <property type="generic name" value="Iroxanadine"/>
</dbReference>
<dbReference type="DrugBank" id="DB17309">
    <property type="generic name" value="Minnelide"/>
</dbReference>
<dbReference type="GlyConnect" id="1296">
    <property type="glycosylation" value="2 N-Linked glycans (2 sites)"/>
</dbReference>
<dbReference type="GlyCosmos" id="P0DMV9">
    <property type="glycosylation" value="1 site, 1 glycan"/>
</dbReference>
<dbReference type="GlyGen" id="P0DMV9">
    <property type="glycosylation" value="3 sites, 1 N-linked glycan (1 site), 1 O-linked glycan (1 site)"/>
</dbReference>
<dbReference type="iPTMnet" id="P0DMV9"/>
<dbReference type="MetOSite" id="P0DMV9"/>
<dbReference type="SwissPalm" id="P0DMV9"/>
<dbReference type="BioMuta" id="HSPA1B"/>
<dbReference type="REPRODUCTION-2DPAGE" id="IPI00304925"/>
<dbReference type="jPOST" id="P0DMV9"/>
<dbReference type="MassIVE" id="P0DMV9"/>
<dbReference type="PRIDE" id="P0DMV9"/>
<dbReference type="Pumba" id="P0DMV9"/>
<dbReference type="Antibodypedia" id="65941">
    <property type="antibodies" value="131 antibodies from 15 providers"/>
</dbReference>
<dbReference type="DNASU" id="3303"/>
<dbReference type="Ensembl" id="ENST00000375650.5">
    <property type="protein sequence ID" value="ENSP00000364801.3"/>
    <property type="gene ID" value="ENSG00000204388.7"/>
</dbReference>
<dbReference type="Ensembl" id="ENST00000391548.1">
    <property type="protein sequence ID" value="ENSP00000375391.1"/>
    <property type="gene ID" value="ENSG00000224501.5"/>
</dbReference>
<dbReference type="Ensembl" id="ENST00000391555.1">
    <property type="protein sequence ID" value="ENSP00000375399.1"/>
    <property type="gene ID" value="ENSG00000212866.6"/>
</dbReference>
<dbReference type="Ensembl" id="ENST00000445736.1">
    <property type="protein sequence ID" value="ENSP00000403530.1"/>
    <property type="gene ID" value="ENSG00000231555.4"/>
</dbReference>
<dbReference type="Ensembl" id="ENST00000450744.1">
    <property type="protein sequence ID" value="ENSP00000393087.1"/>
    <property type="gene ID" value="ENSG00000232804.5"/>
</dbReference>
<dbReference type="GeneID" id="3303"/>
<dbReference type="GeneID" id="3304"/>
<dbReference type="KEGG" id="hsa:3303"/>
<dbReference type="KEGG" id="hsa:3304"/>
<dbReference type="MANE-Select" id="ENST00000375650.5">
    <property type="protein sequence ID" value="ENSP00000364801.3"/>
    <property type="RefSeq nucleotide sequence ID" value="NM_005346.6"/>
    <property type="RefSeq protein sequence ID" value="NP_005337.2"/>
</dbReference>
<dbReference type="AGR" id="HGNC:5232"/>
<dbReference type="AGR" id="HGNC:5233"/>
<dbReference type="CTD" id="3303"/>
<dbReference type="CTD" id="3304"/>
<dbReference type="DisGeNET" id="3303"/>
<dbReference type="DisGeNET" id="3304"/>
<dbReference type="GeneCards" id="HSPA1B"/>
<dbReference type="HGNC" id="HGNC:5233">
    <property type="gene designation" value="HSPA1B"/>
</dbReference>
<dbReference type="HPA" id="ENSG00000204388">
    <property type="expression patterns" value="Low tissue specificity"/>
</dbReference>
<dbReference type="MIM" id="140550">
    <property type="type" value="gene"/>
</dbReference>
<dbReference type="MIM" id="603012">
    <property type="type" value="gene"/>
</dbReference>
<dbReference type="neXtProt" id="NX_P0DMV9"/>
<dbReference type="OpenTargets" id="ENSG00000204388"/>
<dbReference type="OpenTargets" id="ENSG00000204389"/>
<dbReference type="VEuPathDB" id="HostDB:ENSG00000204388"/>
<dbReference type="GeneTree" id="ENSGT00940000161215"/>
<dbReference type="InParanoid" id="P0DMV9"/>
<dbReference type="OMA" id="CWTSARR"/>
<dbReference type="OrthoDB" id="9522975at2759"/>
<dbReference type="PAN-GO" id="P0DMV9">
    <property type="GO annotations" value="17 GO annotations based on evolutionary models"/>
</dbReference>
<dbReference type="PhylomeDB" id="P0DMV9"/>
<dbReference type="PathwayCommons" id="P0DMV9"/>
<dbReference type="Reactome" id="R-HSA-3371453">
    <property type="pathway name" value="Regulation of HSF1-mediated heat shock response"/>
</dbReference>
<dbReference type="Reactome" id="R-HSA-3371497">
    <property type="pathway name" value="HSP90 chaperone cycle for steroid hormone receptors (SHR) in the presence of ligand"/>
</dbReference>
<dbReference type="Reactome" id="R-HSA-3371568">
    <property type="pathway name" value="Attenuation phase"/>
</dbReference>
<dbReference type="Reactome" id="R-HSA-3371571">
    <property type="pathway name" value="HSF1-dependent transactivation"/>
</dbReference>
<dbReference type="Reactome" id="R-HSA-6798695">
    <property type="pathway name" value="Neutrophil degranulation"/>
</dbReference>
<dbReference type="Reactome" id="R-HSA-9833482">
    <property type="pathway name" value="PKR-mediated signaling"/>
</dbReference>
<dbReference type="Reactome" id="R-HSA-9841251">
    <property type="pathway name" value="Mitochondrial unfolded protein response (UPRmt)"/>
</dbReference>
<dbReference type="SignaLink" id="P0DMV9"/>
<dbReference type="SIGNOR" id="P0DMV9"/>
<dbReference type="BioGRID-ORCS" id="3303">
    <property type="hits" value="22 hits in 708 CRISPR screens"/>
</dbReference>
<dbReference type="BioGRID-ORCS" id="3304">
    <property type="hits" value="7 hits in 695 CRISPR screens"/>
</dbReference>
<dbReference type="CD-CODE" id="232F8A39">
    <property type="entry name" value="P-body"/>
</dbReference>
<dbReference type="CD-CODE" id="8C2F96ED">
    <property type="entry name" value="Centrosome"/>
</dbReference>
<dbReference type="CD-CODE" id="91857CE7">
    <property type="entry name" value="Nucleolus"/>
</dbReference>
<dbReference type="CD-CODE" id="F85A2E29">
    <property type="entry name" value="IMP1 RNP granule"/>
</dbReference>
<dbReference type="CD-CODE" id="FB4E32DD">
    <property type="entry name" value="Presynaptic clusters and postsynaptic densities"/>
</dbReference>
<dbReference type="ChiTaRS" id="HSPA1B">
    <property type="organism name" value="human"/>
</dbReference>
<dbReference type="Pharos" id="P0DMV9">
    <property type="development level" value="Tbio"/>
</dbReference>
<dbReference type="PRO" id="PR:P0DMV9"/>
<dbReference type="Proteomes" id="UP000005640">
    <property type="component" value="Chromosome 6"/>
</dbReference>
<dbReference type="RNAct" id="P0DMV9">
    <property type="molecule type" value="protein"/>
</dbReference>
<dbReference type="Bgee" id="ENSG00000204388">
    <property type="expression patterns" value="Expressed in lower esophagus mucosa and 97 other cell types or tissues"/>
</dbReference>
<dbReference type="ExpressionAtlas" id="P0DMV9">
    <property type="expression patterns" value="baseline and differential"/>
</dbReference>
<dbReference type="GO" id="GO:0016235">
    <property type="term" value="C:aggresome"/>
    <property type="evidence" value="ECO:0000314"/>
    <property type="project" value="UniProtKB"/>
</dbReference>
<dbReference type="GO" id="GO:0072562">
    <property type="term" value="C:blood microparticle"/>
    <property type="evidence" value="ECO:0007005"/>
    <property type="project" value="UniProtKB"/>
</dbReference>
<dbReference type="GO" id="GO:0005814">
    <property type="term" value="C:centriole"/>
    <property type="evidence" value="ECO:0000314"/>
    <property type="project" value="UniProtKB"/>
</dbReference>
<dbReference type="GO" id="GO:0005813">
    <property type="term" value="C:centrosome"/>
    <property type="evidence" value="ECO:0000314"/>
    <property type="project" value="UniProtKB"/>
</dbReference>
<dbReference type="GO" id="GO:0005737">
    <property type="term" value="C:cytoplasm"/>
    <property type="evidence" value="ECO:0000314"/>
    <property type="project" value="UniProtKB"/>
</dbReference>
<dbReference type="GO" id="GO:0005829">
    <property type="term" value="C:cytosol"/>
    <property type="evidence" value="ECO:0000314"/>
    <property type="project" value="UniProtKB"/>
</dbReference>
<dbReference type="GO" id="GO:0005783">
    <property type="term" value="C:endoplasmic reticulum"/>
    <property type="evidence" value="ECO:0000304"/>
    <property type="project" value="UniProtKB"/>
</dbReference>
<dbReference type="GO" id="GO:0070062">
    <property type="term" value="C:extracellular exosome"/>
    <property type="evidence" value="ECO:0007005"/>
    <property type="project" value="UniProtKB"/>
</dbReference>
<dbReference type="GO" id="GO:0005576">
    <property type="term" value="C:extracellular region"/>
    <property type="evidence" value="ECO:0000304"/>
    <property type="project" value="Reactome"/>
</dbReference>
<dbReference type="GO" id="GO:1904813">
    <property type="term" value="C:ficolin-1-rich granule lumen"/>
    <property type="evidence" value="ECO:0000304"/>
    <property type="project" value="Reactome"/>
</dbReference>
<dbReference type="GO" id="GO:0005925">
    <property type="term" value="C:focal adhesion"/>
    <property type="evidence" value="ECO:0007005"/>
    <property type="project" value="UniProtKB"/>
</dbReference>
<dbReference type="GO" id="GO:0016234">
    <property type="term" value="C:inclusion body"/>
    <property type="evidence" value="ECO:0000314"/>
    <property type="project" value="BHF-UCL"/>
</dbReference>
<dbReference type="GO" id="GO:0005739">
    <property type="term" value="C:mitochondrion"/>
    <property type="evidence" value="ECO:0000304"/>
    <property type="project" value="UniProtKB"/>
</dbReference>
<dbReference type="GO" id="GO:0016607">
    <property type="term" value="C:nuclear speck"/>
    <property type="evidence" value="ECO:0000314"/>
    <property type="project" value="UniProtKB"/>
</dbReference>
<dbReference type="GO" id="GO:0005654">
    <property type="term" value="C:nucleoplasm"/>
    <property type="evidence" value="ECO:0000304"/>
    <property type="project" value="Reactome"/>
</dbReference>
<dbReference type="GO" id="GO:0005634">
    <property type="term" value="C:nucleus"/>
    <property type="evidence" value="ECO:0000314"/>
    <property type="project" value="UniProtKB"/>
</dbReference>
<dbReference type="GO" id="GO:0048471">
    <property type="term" value="C:perinuclear region of cytoplasm"/>
    <property type="evidence" value="ECO:0000314"/>
    <property type="project" value="UniProtKB"/>
</dbReference>
<dbReference type="GO" id="GO:0005886">
    <property type="term" value="C:plasma membrane"/>
    <property type="evidence" value="ECO:0000318"/>
    <property type="project" value="GO_Central"/>
</dbReference>
<dbReference type="GO" id="GO:0032991">
    <property type="term" value="C:protein-containing complex"/>
    <property type="evidence" value="ECO:0000314"/>
    <property type="project" value="UniProtKB"/>
</dbReference>
<dbReference type="GO" id="GO:1990904">
    <property type="term" value="C:ribonucleoprotein complex"/>
    <property type="evidence" value="ECO:0000314"/>
    <property type="project" value="UniProtKB"/>
</dbReference>
<dbReference type="GO" id="GO:0031982">
    <property type="term" value="C:vesicle"/>
    <property type="evidence" value="ECO:0007005"/>
    <property type="project" value="UniProtKB"/>
</dbReference>
<dbReference type="GO" id="GO:0005524">
    <property type="term" value="F:ATP binding"/>
    <property type="evidence" value="ECO:0000314"/>
    <property type="project" value="BHF-UCL"/>
</dbReference>
<dbReference type="GO" id="GO:0016887">
    <property type="term" value="F:ATP hydrolysis activity"/>
    <property type="evidence" value="ECO:0000314"/>
    <property type="project" value="UniProtKB"/>
</dbReference>
<dbReference type="GO" id="GO:0140545">
    <property type="term" value="F:ATP-dependent protein disaggregase activity"/>
    <property type="evidence" value="ECO:0000314"/>
    <property type="project" value="BHF-UCL"/>
</dbReference>
<dbReference type="GO" id="GO:0140662">
    <property type="term" value="F:ATP-dependent protein folding chaperone"/>
    <property type="evidence" value="ECO:0007669"/>
    <property type="project" value="InterPro"/>
</dbReference>
<dbReference type="GO" id="GO:0055131">
    <property type="term" value="F:C3HC4-type RING finger domain binding"/>
    <property type="evidence" value="ECO:0000353"/>
    <property type="project" value="BHF-UCL"/>
</dbReference>
<dbReference type="GO" id="GO:0019899">
    <property type="term" value="F:enzyme binding"/>
    <property type="evidence" value="ECO:0000353"/>
    <property type="project" value="BHF-UCL"/>
</dbReference>
<dbReference type="GO" id="GO:0001664">
    <property type="term" value="F:G protein-coupled receptor binding"/>
    <property type="evidence" value="ECO:0000314"/>
    <property type="project" value="ParkinsonsUK-UCL"/>
</dbReference>
<dbReference type="GO" id="GO:0031072">
    <property type="term" value="F:heat shock protein binding"/>
    <property type="evidence" value="ECO:0000353"/>
    <property type="project" value="UniProtKB"/>
</dbReference>
<dbReference type="GO" id="GO:0042826">
    <property type="term" value="F:histone deacetylase binding"/>
    <property type="evidence" value="ECO:0000353"/>
    <property type="project" value="BHF-UCL"/>
</dbReference>
<dbReference type="GO" id="GO:0044183">
    <property type="term" value="F:protein folding chaperone"/>
    <property type="evidence" value="ECO:0000314"/>
    <property type="project" value="BHF-UCL"/>
</dbReference>
<dbReference type="GO" id="GO:0003723">
    <property type="term" value="F:RNA binding"/>
    <property type="evidence" value="ECO:0007005"/>
    <property type="project" value="UniProtKB"/>
</dbReference>
<dbReference type="GO" id="GO:0005102">
    <property type="term" value="F:signaling receptor binding"/>
    <property type="evidence" value="ECO:0000353"/>
    <property type="project" value="UniProtKB"/>
</dbReference>
<dbReference type="GO" id="GO:0031625">
    <property type="term" value="F:ubiquitin protein ligase binding"/>
    <property type="evidence" value="ECO:0000353"/>
    <property type="project" value="ParkinsonsUK-UCL"/>
</dbReference>
<dbReference type="GO" id="GO:0051082">
    <property type="term" value="F:unfolded protein binding"/>
    <property type="evidence" value="ECO:0000314"/>
    <property type="project" value="UniProtKB"/>
</dbReference>
<dbReference type="GO" id="GO:0001618">
    <property type="term" value="F:virus receptor activity"/>
    <property type="evidence" value="ECO:0007669"/>
    <property type="project" value="UniProtKB-KW"/>
</dbReference>
<dbReference type="GO" id="GO:0046034">
    <property type="term" value="P:ATP metabolic process"/>
    <property type="evidence" value="ECO:0000314"/>
    <property type="project" value="BHF-UCL"/>
</dbReference>
<dbReference type="GO" id="GO:0070370">
    <property type="term" value="P:cellular heat acclimation"/>
    <property type="evidence" value="ECO:0000315"/>
    <property type="project" value="UniProtKB"/>
</dbReference>
<dbReference type="GO" id="GO:0034605">
    <property type="term" value="P:cellular response to heat"/>
    <property type="evidence" value="ECO:0000314"/>
    <property type="project" value="UniProtKB"/>
</dbReference>
<dbReference type="GO" id="GO:0034599">
    <property type="term" value="P:cellular response to oxidative stress"/>
    <property type="evidence" value="ECO:0000304"/>
    <property type="project" value="ParkinsonsUK-UCL"/>
</dbReference>
<dbReference type="GO" id="GO:0071383">
    <property type="term" value="P:cellular response to steroid hormone stimulus"/>
    <property type="evidence" value="ECO:0000304"/>
    <property type="project" value="Reactome"/>
</dbReference>
<dbReference type="GO" id="GO:0051085">
    <property type="term" value="P:chaperone cofactor-dependent protein refolding"/>
    <property type="evidence" value="ECO:0000318"/>
    <property type="project" value="GO_Central"/>
</dbReference>
<dbReference type="GO" id="GO:0006402">
    <property type="term" value="P:mRNA catabolic process"/>
    <property type="evidence" value="ECO:0000314"/>
    <property type="project" value="UniProtKB"/>
</dbReference>
<dbReference type="GO" id="GO:0043066">
    <property type="term" value="P:negative regulation of apoptotic process"/>
    <property type="evidence" value="ECO:0000315"/>
    <property type="project" value="UniProtKB"/>
</dbReference>
<dbReference type="GO" id="GO:0030308">
    <property type="term" value="P:negative regulation of cell growth"/>
    <property type="evidence" value="ECO:0000315"/>
    <property type="project" value="UniProtKB"/>
</dbReference>
<dbReference type="GO" id="GO:0008285">
    <property type="term" value="P:negative regulation of cell population proliferation"/>
    <property type="evidence" value="ECO:0000315"/>
    <property type="project" value="UniProtKB"/>
</dbReference>
<dbReference type="GO" id="GO:2001240">
    <property type="term" value="P:negative regulation of extrinsic apoptotic signaling pathway in absence of ligand"/>
    <property type="evidence" value="ECO:0000315"/>
    <property type="project" value="BHF-UCL"/>
</dbReference>
<dbReference type="GO" id="GO:0090084">
    <property type="term" value="P:negative regulation of inclusion body assembly"/>
    <property type="evidence" value="ECO:0000314"/>
    <property type="project" value="UniProtKB"/>
</dbReference>
<dbReference type="GO" id="GO:0031397">
    <property type="term" value="P:negative regulation of protein ubiquitination"/>
    <property type="evidence" value="ECO:0000314"/>
    <property type="project" value="ParkinsonsUK-UCL"/>
</dbReference>
<dbReference type="GO" id="GO:0045648">
    <property type="term" value="P:positive regulation of erythrocyte differentiation"/>
    <property type="evidence" value="ECO:0000315"/>
    <property type="project" value="UniProtKB"/>
</dbReference>
<dbReference type="GO" id="GO:0010628">
    <property type="term" value="P:positive regulation of gene expression"/>
    <property type="evidence" value="ECO:0000315"/>
    <property type="project" value="BHF-UCL"/>
</dbReference>
<dbReference type="GO" id="GO:0032757">
    <property type="term" value="P:positive regulation of interleukin-8 production"/>
    <property type="evidence" value="ECO:0000315"/>
    <property type="project" value="UniProtKB"/>
</dbReference>
<dbReference type="GO" id="GO:0090063">
    <property type="term" value="P:positive regulation of microtubule nucleation"/>
    <property type="evidence" value="ECO:0000315"/>
    <property type="project" value="UniProtKB"/>
</dbReference>
<dbReference type="GO" id="GO:0051092">
    <property type="term" value="P:positive regulation of NF-kappaB transcription factor activity"/>
    <property type="evidence" value="ECO:0000315"/>
    <property type="project" value="UniProtKB"/>
</dbReference>
<dbReference type="GO" id="GO:0070434">
    <property type="term" value="P:positive regulation of nucleotide-binding oligomerization domain containing 2 signaling pathway"/>
    <property type="evidence" value="ECO:0000315"/>
    <property type="project" value="UniProtKB"/>
</dbReference>
<dbReference type="GO" id="GO:0032436">
    <property type="term" value="P:positive regulation of proteasomal ubiquitin-dependent protein catabolic process"/>
    <property type="evidence" value="ECO:0000318"/>
    <property type="project" value="GO_Central"/>
</dbReference>
<dbReference type="GO" id="GO:1903265">
    <property type="term" value="P:positive regulation of tumor necrosis factor-mediated signaling pathway"/>
    <property type="evidence" value="ECO:0000315"/>
    <property type="project" value="UniProtKB"/>
</dbReference>
<dbReference type="GO" id="GO:0042026">
    <property type="term" value="P:protein refolding"/>
    <property type="evidence" value="ECO:0000314"/>
    <property type="project" value="UniProtKB"/>
</dbReference>
<dbReference type="GO" id="GO:0050821">
    <property type="term" value="P:protein stabilization"/>
    <property type="evidence" value="ECO:0000315"/>
    <property type="project" value="UniProtKB"/>
</dbReference>
<dbReference type="GO" id="GO:1901673">
    <property type="term" value="P:regulation of mitotic spindle assembly"/>
    <property type="evidence" value="ECO:0000315"/>
    <property type="project" value="UniProtKB"/>
</dbReference>
<dbReference type="GO" id="GO:0031396">
    <property type="term" value="P:regulation of protein ubiquitination"/>
    <property type="evidence" value="ECO:0000314"/>
    <property type="project" value="BHF-UCL"/>
</dbReference>
<dbReference type="CDD" id="cd10233">
    <property type="entry name" value="ASKHA_NBD_HSP70_HSPA1"/>
    <property type="match status" value="1"/>
</dbReference>
<dbReference type="DisProt" id="DP02353"/>
<dbReference type="FunFam" id="2.60.34.10:FF:000002">
    <property type="entry name" value="Heat shock 70 kDa"/>
    <property type="match status" value="1"/>
</dbReference>
<dbReference type="FunFam" id="3.30.420.40:FF:000172">
    <property type="entry name" value="Heat shock 70 kDa protein"/>
    <property type="match status" value="1"/>
</dbReference>
<dbReference type="FunFam" id="3.30.30.30:FF:000001">
    <property type="entry name" value="heat shock 70 kDa protein-like"/>
    <property type="match status" value="1"/>
</dbReference>
<dbReference type="FunFam" id="3.30.420.40:FF:000028">
    <property type="entry name" value="heat shock 70 kDa protein-like"/>
    <property type="match status" value="1"/>
</dbReference>
<dbReference type="FunFam" id="3.30.420.40:FF:000135">
    <property type="entry name" value="Heat shock cognate 71 kDa protein"/>
    <property type="match status" value="1"/>
</dbReference>
<dbReference type="FunFam" id="3.90.640.10:FF:000134">
    <property type="entry name" value="Heat shock cognate 71 kDa protein"/>
    <property type="match status" value="1"/>
</dbReference>
<dbReference type="FunFam" id="1.20.1270.10:FF:000003">
    <property type="entry name" value="heat shock cognate 71 kDa protein-like"/>
    <property type="match status" value="1"/>
</dbReference>
<dbReference type="FunFam" id="3.30.420.40:FF:000026">
    <property type="entry name" value="Heat shock protein 70"/>
    <property type="match status" value="1"/>
</dbReference>
<dbReference type="Gene3D" id="1.20.1270.10">
    <property type="match status" value="1"/>
</dbReference>
<dbReference type="Gene3D" id="3.30.30.30">
    <property type="match status" value="1"/>
</dbReference>
<dbReference type="Gene3D" id="3.30.420.40">
    <property type="match status" value="2"/>
</dbReference>
<dbReference type="Gene3D" id="3.90.640.10">
    <property type="entry name" value="Actin, Chain A, domain 4"/>
    <property type="match status" value="1"/>
</dbReference>
<dbReference type="Gene3D" id="2.60.34.10">
    <property type="entry name" value="Substrate Binding Domain Of DNAk, Chain A, domain 1"/>
    <property type="match status" value="1"/>
</dbReference>
<dbReference type="InterPro" id="IPR043129">
    <property type="entry name" value="ATPase_NBD"/>
</dbReference>
<dbReference type="InterPro" id="IPR018181">
    <property type="entry name" value="Heat_shock_70_CS"/>
</dbReference>
<dbReference type="InterPro" id="IPR029048">
    <property type="entry name" value="HSP70_C_sf"/>
</dbReference>
<dbReference type="InterPro" id="IPR029047">
    <property type="entry name" value="HSP70_peptide-bd_sf"/>
</dbReference>
<dbReference type="InterPro" id="IPR013126">
    <property type="entry name" value="Hsp_70_fam"/>
</dbReference>
<dbReference type="NCBIfam" id="NF001413">
    <property type="entry name" value="PRK00290.1"/>
    <property type="match status" value="1"/>
</dbReference>
<dbReference type="PANTHER" id="PTHR19375">
    <property type="entry name" value="HEAT SHOCK PROTEIN 70KDA"/>
    <property type="match status" value="1"/>
</dbReference>
<dbReference type="Pfam" id="PF00012">
    <property type="entry name" value="HSP70"/>
    <property type="match status" value="1"/>
</dbReference>
<dbReference type="PRINTS" id="PR00301">
    <property type="entry name" value="HEATSHOCK70"/>
</dbReference>
<dbReference type="SUPFAM" id="SSF53067">
    <property type="entry name" value="Actin-like ATPase domain"/>
    <property type="match status" value="2"/>
</dbReference>
<dbReference type="SUPFAM" id="SSF100934">
    <property type="entry name" value="Heat shock protein 70kD (HSP70), C-terminal subdomain"/>
    <property type="match status" value="1"/>
</dbReference>
<dbReference type="SUPFAM" id="SSF100920">
    <property type="entry name" value="Heat shock protein 70kD (HSP70), peptide-binding domain"/>
    <property type="match status" value="1"/>
</dbReference>
<dbReference type="PROSITE" id="PS00297">
    <property type="entry name" value="HSP70_1"/>
    <property type="match status" value="1"/>
</dbReference>
<dbReference type="PROSITE" id="PS00329">
    <property type="entry name" value="HSP70_2"/>
    <property type="match status" value="1"/>
</dbReference>
<dbReference type="PROSITE" id="PS01036">
    <property type="entry name" value="HSP70_3"/>
    <property type="match status" value="1"/>
</dbReference>
<evidence type="ECO:0000250" key="1">
    <source>
        <dbReference type="UniProtKB" id="P11142"/>
    </source>
</evidence>
<evidence type="ECO:0000256" key="2">
    <source>
        <dbReference type="SAM" id="MobiDB-lite"/>
    </source>
</evidence>
<evidence type="ECO:0000269" key="3">
    <source>
    </source>
</evidence>
<evidence type="ECO:0000269" key="4">
    <source>
    </source>
</evidence>
<evidence type="ECO:0000269" key="5">
    <source>
    </source>
</evidence>
<evidence type="ECO:0000269" key="6">
    <source>
    </source>
</evidence>
<evidence type="ECO:0000269" key="7">
    <source>
    </source>
</evidence>
<evidence type="ECO:0000269" key="8">
    <source>
    </source>
</evidence>
<evidence type="ECO:0000269" key="9">
    <source>
    </source>
</evidence>
<evidence type="ECO:0000269" key="10">
    <source>
    </source>
</evidence>
<evidence type="ECO:0000269" key="11">
    <source>
    </source>
</evidence>
<evidence type="ECO:0000269" key="12">
    <source>
    </source>
</evidence>
<evidence type="ECO:0000269" key="13">
    <source>
    </source>
</evidence>
<evidence type="ECO:0000269" key="14">
    <source>
    </source>
</evidence>
<evidence type="ECO:0000269" key="15">
    <source>
    </source>
</evidence>
<evidence type="ECO:0000269" key="16">
    <source>
    </source>
</evidence>
<evidence type="ECO:0000269" key="17">
    <source>
    </source>
</evidence>
<evidence type="ECO:0000269" key="18">
    <source>
    </source>
</evidence>
<evidence type="ECO:0000269" key="19">
    <source>
    </source>
</evidence>
<evidence type="ECO:0000269" key="20">
    <source>
    </source>
</evidence>
<evidence type="ECO:0000269" key="21">
    <source>
    </source>
</evidence>
<evidence type="ECO:0000269" key="22">
    <source>
    </source>
</evidence>
<evidence type="ECO:0000269" key="23">
    <source>
    </source>
</evidence>
<evidence type="ECO:0000269" key="24">
    <source>
    </source>
</evidence>
<evidence type="ECO:0000269" key="25">
    <source>
    </source>
</evidence>
<evidence type="ECO:0000269" key="26">
    <source>
    </source>
</evidence>
<evidence type="ECO:0000269" key="27">
    <source>
    </source>
</evidence>
<evidence type="ECO:0000269" key="28">
    <source>
    </source>
</evidence>
<evidence type="ECO:0000269" key="29">
    <source>
    </source>
</evidence>
<evidence type="ECO:0000269" key="30">
    <source>
    </source>
</evidence>
<evidence type="ECO:0000269" key="31">
    <source>
    </source>
</evidence>
<evidence type="ECO:0000269" key="32">
    <source ref="4"/>
</evidence>
<evidence type="ECO:0000303" key="33">
    <source>
    </source>
</evidence>
<evidence type="ECO:0000303" key="34">
    <source>
    </source>
</evidence>
<evidence type="ECO:0000303" key="35">
    <source>
    </source>
</evidence>
<evidence type="ECO:0000303" key="36">
    <source>
    </source>
</evidence>
<evidence type="ECO:0000303" key="37">
    <source>
    </source>
</evidence>
<evidence type="ECO:0000305" key="38"/>
<evidence type="ECO:0000305" key="39">
    <source>
    </source>
</evidence>
<evidence type="ECO:0000305" key="40">
    <source>
    </source>
</evidence>
<evidence type="ECO:0000312" key="41">
    <source>
        <dbReference type="HGNC" id="HGNC:5233"/>
    </source>
</evidence>
<evidence type="ECO:0007744" key="42">
    <source>
    </source>
</evidence>
<evidence type="ECO:0007744" key="43">
    <source>
    </source>
</evidence>
<evidence type="ECO:0007744" key="44">
    <source>
    </source>
</evidence>
<evidence type="ECO:0007744" key="45">
    <source>
    </source>
</evidence>
<evidence type="ECO:0007829" key="46">
    <source>
        <dbReference type="PDB" id="6FDT"/>
    </source>
</evidence>
<evidence type="ECO:0007829" key="47">
    <source>
        <dbReference type="PDB" id="7F50"/>
    </source>
</evidence>
<accession>P0DMV9</accession>
<accession>B4E3B6</accession>
<accession>P08107</accession>
<accession>P19790</accession>
<accession>Q5JQI4</accession>
<accession>Q5SP17</accession>
<accession>Q9UQL9</accession>
<accession>Q9UQM0</accession>
<gene>
    <name evidence="41" type="primary">HSPA1B</name>
    <name evidence="35" type="synonym">HSP72</name>
</gene>
<proteinExistence type="evidence at protein level"/>
<protein>
    <recommendedName>
        <fullName evidence="41">Heat shock 70 kDa protein 1B</fullName>
    </recommendedName>
    <alternativeName>
        <fullName>Heat shock 70 kDa protein 2</fullName>
        <shortName evidence="33 36">HSP70-2</shortName>
        <shortName>HSP70.2</shortName>
    </alternativeName>
    <alternativeName>
        <fullName>Heat shock protein family A member 1B</fullName>
    </alternativeName>
</protein>
<keyword id="KW-0002">3D-structure</keyword>
<keyword id="KW-0007">Acetylation</keyword>
<keyword id="KW-0067">ATP-binding</keyword>
<keyword id="KW-0143">Chaperone</keyword>
<keyword id="KW-0963">Cytoplasm</keyword>
<keyword id="KW-0206">Cytoskeleton</keyword>
<keyword id="KW-0903">Direct protein sequencing</keyword>
<keyword id="KW-1183">Host cell receptor for virus entry</keyword>
<keyword id="KW-0945">Host-virus interaction</keyword>
<keyword id="KW-0488">Methylation</keyword>
<keyword id="KW-0547">Nucleotide-binding</keyword>
<keyword id="KW-0597">Phosphoprotein</keyword>
<keyword id="KW-0675">Receptor</keyword>
<keyword id="KW-1185">Reference proteome</keyword>
<keyword id="KW-0346">Stress response</keyword>
<organism>
    <name type="scientific">Homo sapiens</name>
    <name type="common">Human</name>
    <dbReference type="NCBI Taxonomy" id="9606"/>
    <lineage>
        <taxon>Eukaryota</taxon>
        <taxon>Metazoa</taxon>
        <taxon>Chordata</taxon>
        <taxon>Craniata</taxon>
        <taxon>Vertebrata</taxon>
        <taxon>Euteleostomi</taxon>
        <taxon>Mammalia</taxon>
        <taxon>Eutheria</taxon>
        <taxon>Euarchontoglires</taxon>
        <taxon>Primates</taxon>
        <taxon>Haplorrhini</taxon>
        <taxon>Catarrhini</taxon>
        <taxon>Hominidae</taxon>
        <taxon>Homo</taxon>
    </lineage>
</organism>